<gene>
    <name evidence="7" type="primary">Pcdhb8</name>
</gene>
<protein>
    <recommendedName>
        <fullName evidence="5">Protocadherin beta-8</fullName>
        <shortName evidence="5">PCDH-beta-8</shortName>
    </recommendedName>
</protein>
<organism>
    <name type="scientific">Mus musculus</name>
    <name type="common">Mouse</name>
    <dbReference type="NCBI Taxonomy" id="10090"/>
    <lineage>
        <taxon>Eukaryota</taxon>
        <taxon>Metazoa</taxon>
        <taxon>Chordata</taxon>
        <taxon>Craniata</taxon>
        <taxon>Vertebrata</taxon>
        <taxon>Euteleostomi</taxon>
        <taxon>Mammalia</taxon>
        <taxon>Eutheria</taxon>
        <taxon>Euarchontoglires</taxon>
        <taxon>Glires</taxon>
        <taxon>Rodentia</taxon>
        <taxon>Myomorpha</taxon>
        <taxon>Muroidea</taxon>
        <taxon>Muridae</taxon>
        <taxon>Murinae</taxon>
        <taxon>Mus</taxon>
        <taxon>Mus</taxon>
    </lineage>
</organism>
<dbReference type="EMBL" id="AY013790">
    <property type="protein sequence ID" value="AAK26079.1"/>
    <property type="molecule type" value="mRNA"/>
</dbReference>
<dbReference type="EMBL" id="AC020974">
    <property type="status" value="NOT_ANNOTATED_CDS"/>
    <property type="molecule type" value="Genomic_DNA"/>
</dbReference>
<dbReference type="EMBL" id="CH466528">
    <property type="protein sequence ID" value="EDL10163.1"/>
    <property type="molecule type" value="Genomic_DNA"/>
</dbReference>
<dbReference type="EMBL" id="BC127160">
    <property type="protein sequence ID" value="AAI27161.1"/>
    <property type="molecule type" value="mRNA"/>
</dbReference>
<dbReference type="CCDS" id="CCDS29175.1"/>
<dbReference type="RefSeq" id="NP_444363.1">
    <property type="nucleotide sequence ID" value="NM_053133.1"/>
</dbReference>
<dbReference type="PDB" id="5DZY">
    <property type="method" value="X-ray"/>
    <property type="resolution" value="2.90 A"/>
    <property type="chains" value="A/B/C/D/E/F=29-446"/>
</dbReference>
<dbReference type="PDBsum" id="5DZY"/>
<dbReference type="SMR" id="Q91XZ2"/>
<dbReference type="FunCoup" id="Q91XZ2">
    <property type="interactions" value="1"/>
</dbReference>
<dbReference type="STRING" id="10090.ENSMUSP00000054371"/>
<dbReference type="GlyCosmos" id="Q91XZ2">
    <property type="glycosylation" value="6 sites, No reported glycans"/>
</dbReference>
<dbReference type="GlyGen" id="Q91XZ2">
    <property type="glycosylation" value="6 sites, 2 N-linked glycans (2 sites)"/>
</dbReference>
<dbReference type="iPTMnet" id="Q91XZ2"/>
<dbReference type="PhosphoSitePlus" id="Q91XZ2"/>
<dbReference type="PaxDb" id="10090-ENSMUSP00000054371"/>
<dbReference type="ProteomicsDB" id="288112"/>
<dbReference type="DNASU" id="93879"/>
<dbReference type="Ensembl" id="ENSMUST00000051163.3">
    <property type="protein sequence ID" value="ENSMUSP00000054371.2"/>
    <property type="gene ID" value="ENSMUSG00000045876.5"/>
</dbReference>
<dbReference type="GeneID" id="93879"/>
<dbReference type="KEGG" id="mmu:93879"/>
<dbReference type="UCSC" id="uc008ept.1">
    <property type="organism name" value="mouse"/>
</dbReference>
<dbReference type="AGR" id="MGI:2136742"/>
<dbReference type="CTD" id="56128"/>
<dbReference type="MGI" id="MGI:2136742">
    <property type="gene designation" value="Pcdhb8"/>
</dbReference>
<dbReference type="VEuPathDB" id="HostDB:ENSMUSG00000045876"/>
<dbReference type="eggNOG" id="KOG3594">
    <property type="taxonomic scope" value="Eukaryota"/>
</dbReference>
<dbReference type="GeneTree" id="ENSGT00940000157793"/>
<dbReference type="HOGENOM" id="CLU_006480_3_0_1"/>
<dbReference type="InParanoid" id="Q91XZ2"/>
<dbReference type="OMA" id="REVMCGT"/>
<dbReference type="OrthoDB" id="6252479at2759"/>
<dbReference type="PhylomeDB" id="Q91XZ2"/>
<dbReference type="TreeFam" id="TF332299"/>
<dbReference type="BioGRID-ORCS" id="93879">
    <property type="hits" value="3 hits in 77 CRISPR screens"/>
</dbReference>
<dbReference type="PRO" id="PR:Q91XZ2"/>
<dbReference type="Proteomes" id="UP000000589">
    <property type="component" value="Chromosome 18"/>
</dbReference>
<dbReference type="RNAct" id="Q91XZ2">
    <property type="molecule type" value="protein"/>
</dbReference>
<dbReference type="Bgee" id="ENSMUSG00000045876">
    <property type="expression patterns" value="Expressed in epibranchial ganglion and 40 other cell types or tissues"/>
</dbReference>
<dbReference type="ExpressionAtlas" id="Q91XZ2">
    <property type="expression patterns" value="baseline and differential"/>
</dbReference>
<dbReference type="GO" id="GO:0005886">
    <property type="term" value="C:plasma membrane"/>
    <property type="evidence" value="ECO:0007669"/>
    <property type="project" value="UniProtKB-SubCell"/>
</dbReference>
<dbReference type="GO" id="GO:0005509">
    <property type="term" value="F:calcium ion binding"/>
    <property type="evidence" value="ECO:0000314"/>
    <property type="project" value="UniProtKB"/>
</dbReference>
<dbReference type="GO" id="GO:0042802">
    <property type="term" value="F:identical protein binding"/>
    <property type="evidence" value="ECO:0000314"/>
    <property type="project" value="UniProtKB"/>
</dbReference>
<dbReference type="GO" id="GO:0007156">
    <property type="term" value="P:homophilic cell adhesion via plasma membrane adhesion molecules"/>
    <property type="evidence" value="ECO:0000305"/>
    <property type="project" value="UniProtKB"/>
</dbReference>
<dbReference type="CDD" id="cd11304">
    <property type="entry name" value="Cadherin_repeat"/>
    <property type="match status" value="5"/>
</dbReference>
<dbReference type="FunFam" id="2.60.40.60:FF:000001">
    <property type="entry name" value="Protocadherin alpha 2"/>
    <property type="match status" value="1"/>
</dbReference>
<dbReference type="FunFam" id="2.60.40.60:FF:000002">
    <property type="entry name" value="Protocadherin alpha 2"/>
    <property type="match status" value="1"/>
</dbReference>
<dbReference type="FunFam" id="2.60.40.60:FF:000006">
    <property type="entry name" value="Protocadherin alpha 2"/>
    <property type="match status" value="1"/>
</dbReference>
<dbReference type="FunFam" id="2.60.40.60:FF:000046">
    <property type="entry name" value="Protocadherin beta 5"/>
    <property type="match status" value="1"/>
</dbReference>
<dbReference type="FunFam" id="2.60.40.60:FF:000309">
    <property type="entry name" value="Protocadherin beta-8"/>
    <property type="match status" value="1"/>
</dbReference>
<dbReference type="FunFam" id="2.60.40.60:FF:000018">
    <property type="entry name" value="Protocadherin gamma c3"/>
    <property type="match status" value="1"/>
</dbReference>
<dbReference type="Gene3D" id="2.60.40.60">
    <property type="entry name" value="Cadherins"/>
    <property type="match status" value="6"/>
</dbReference>
<dbReference type="InterPro" id="IPR002126">
    <property type="entry name" value="Cadherin-like_dom"/>
</dbReference>
<dbReference type="InterPro" id="IPR015919">
    <property type="entry name" value="Cadherin-like_sf"/>
</dbReference>
<dbReference type="InterPro" id="IPR032455">
    <property type="entry name" value="Cadherin_C"/>
</dbReference>
<dbReference type="InterPro" id="IPR020894">
    <property type="entry name" value="Cadherin_CS"/>
</dbReference>
<dbReference type="InterPro" id="IPR013164">
    <property type="entry name" value="Cadherin_N"/>
</dbReference>
<dbReference type="InterPro" id="IPR050174">
    <property type="entry name" value="Protocadherin/Cadherin-CA"/>
</dbReference>
<dbReference type="PANTHER" id="PTHR24028">
    <property type="entry name" value="CADHERIN-87A"/>
    <property type="match status" value="1"/>
</dbReference>
<dbReference type="PANTHER" id="PTHR24028:SF308">
    <property type="entry name" value="PROTOCADHERIN BETA 4-RELATED"/>
    <property type="match status" value="1"/>
</dbReference>
<dbReference type="Pfam" id="PF00028">
    <property type="entry name" value="Cadherin"/>
    <property type="match status" value="5"/>
</dbReference>
<dbReference type="Pfam" id="PF08266">
    <property type="entry name" value="Cadherin_2"/>
    <property type="match status" value="1"/>
</dbReference>
<dbReference type="Pfam" id="PF16492">
    <property type="entry name" value="Cadherin_C_2"/>
    <property type="match status" value="1"/>
</dbReference>
<dbReference type="PRINTS" id="PR00205">
    <property type="entry name" value="CADHERIN"/>
</dbReference>
<dbReference type="SMART" id="SM00112">
    <property type="entry name" value="CA"/>
    <property type="match status" value="5"/>
</dbReference>
<dbReference type="SUPFAM" id="SSF49313">
    <property type="entry name" value="Cadherin-like"/>
    <property type="match status" value="5"/>
</dbReference>
<dbReference type="PROSITE" id="PS00232">
    <property type="entry name" value="CADHERIN_1"/>
    <property type="match status" value="4"/>
</dbReference>
<dbReference type="PROSITE" id="PS50268">
    <property type="entry name" value="CADHERIN_2"/>
    <property type="match status" value="5"/>
</dbReference>
<sequence>METALTKTPEKRQVIFLAILLLLWEASSEAISYSMPEETESGYLVANLAQDLGLRVGELTTRGARIHHNGNKELLQLDAERGNLLLKEKPDREALCGATEPCVLHFQIILENPVQFFQTDLQFTDINDHFPEFPDTEMLLKIQEIAQPGTVFPLKAAQDPDIGSNAVQNYTVSPNLHFHVVTLSRSDDRKYPELVLDRALDREEQPELTLILTALDGGAPPKSGTTTVRIEVVDINDNAPQFLQSLYAVEVPENSPLNALVVTVSARDLDAGIHGNVAYSLFQGGGGPQPFVIDEITGEIRLKGALDFEATSYYTMEIVATDSGGLSGKCTVAIQVLDVNDNAPKLTISSLTSSIPENAPEAVVAVFSVSDPDSGDNGRMVCSIQNGLPFLLKPTFKNFYTLVTERPLDRESNAEYNITITVSDLGTPRLTTQHTITVQVSDINDNAPAFTQTSYTLFVHENNSPALHIGTISATDSDSGSNGLIIYSLLPPHDQQLGLASLISINSDNGQLFALRALDYEALQAFEFHVGATDRGSPALSSEALVRVVVLDDNDNAPFVLYPLQNASAPCTELLPRAAEPGYLITKVVAVDRDSGQNAWLSFQLLKATEPGLFSVWAHNGEVRTTRLLSERDAPKHRLLLLVKDNGEPLRSASVMLQVLVVDGFSQPYLPLPEVALNPTQEEDMLTLYLVIALASVSSLFLLSVLLFVGVKLCKKAREASLADCSIPEGHFPSHLVDVSGAGTLSQSYHYEVCLTEDSGTSDFKFMNPIIPSSLLQDS</sequence>
<comment type="function">
    <text evidence="6">Calcium-dependent cell-adhesion protein involved in cells self-recognition and non-self discrimination (Probable). Thereby, it is involved in the establishment and maintenance of specific neuronal connections in the brain (PubMed:27161523).</text>
</comment>
<comment type="subunit">
    <text evidence="4">Forms homodimers in trans (molecules expressed by two different cells) (PubMed:27161523). Forms promiscuous heterodimers in cis (at the plasma membrane of the same cell) with other protocadherins (PubMed:27161523).</text>
</comment>
<comment type="subcellular location">
    <subcellularLocation>
        <location evidence="6">Cell membrane</location>
        <topology evidence="6">Single-pass type I membrane protein</topology>
    </subcellularLocation>
</comment>
<comment type="domain">
    <text evidence="4 8">Cadherin 1 to cadherin 4 domains mediate homophilic trans-interaction, the interaction with an identical protocadherin expressed by a neighboring cell (PubMed:27161523). This is a head-to-tail interaction, the cadherin 1 domain interacting with the cadherin 4 domain and the cadherin 2 domain interacting the cadherin 3 domain of the other protocadherin (PubMed:27161523). The cadherin 6 domain mediates promiscuous interactions with protocadherins on the same cell membrane (PubMed:27161523). Each cadherin domain binds three calcium ions (PubMed:27161523).</text>
</comment>
<feature type="signal peptide" evidence="4">
    <location>
        <begin position="1"/>
        <end position="28"/>
    </location>
</feature>
<feature type="chain" id="PRO_5008429396" description="Protocadherin beta-8" evidence="5">
    <location>
        <begin position="29"/>
        <end position="779"/>
    </location>
</feature>
<feature type="topological domain" description="Extracellular" evidence="6">
    <location>
        <begin position="29"/>
        <end position="690"/>
    </location>
</feature>
<feature type="transmembrane region" description="Helical" evidence="1">
    <location>
        <begin position="691"/>
        <end position="711"/>
    </location>
</feature>
<feature type="topological domain" description="Cytoplasmic" evidence="6">
    <location>
        <begin position="712"/>
        <end position="779"/>
    </location>
</feature>
<feature type="domain" description="Cadherin 1" evidence="2">
    <location>
        <begin position="75"/>
        <end position="133"/>
    </location>
</feature>
<feature type="domain" description="Cadherin 2" evidence="2">
    <location>
        <begin position="134"/>
        <end position="242"/>
    </location>
</feature>
<feature type="domain" description="Cadherin 3" evidence="2">
    <location>
        <begin position="243"/>
        <end position="346"/>
    </location>
</feature>
<feature type="domain" description="Cadherin 4" evidence="2">
    <location>
        <begin position="347"/>
        <end position="450"/>
    </location>
</feature>
<feature type="domain" description="Cadherin 5" evidence="2">
    <location>
        <begin position="451"/>
        <end position="560"/>
    </location>
</feature>
<feature type="domain" description="Cadherin 6" evidence="2">
    <location>
        <begin position="575"/>
        <end position="675"/>
    </location>
</feature>
<feature type="glycosylation site" description="N-linked (GlcNAc...) asparagine" evidence="4 8">
    <location>
        <position position="169"/>
    </location>
</feature>
<feature type="glycosylation site" description="O-linked (Man) serine" evidence="4 8">
    <location>
        <position position="223"/>
    </location>
</feature>
<feature type="glycosylation site" description="O-linked (Man) threonine" evidence="4 8">
    <location>
        <position position="225"/>
    </location>
</feature>
<feature type="glycosylation site" description="O-linked (Man) threonine" evidence="4 8">
    <location>
        <position position="227"/>
    </location>
</feature>
<feature type="glycosylation site" description="N-linked (GlcNAc...) asparagine" evidence="4 8">
    <location>
        <position position="417"/>
    </location>
</feature>
<feature type="glycosylation site" description="N-linked (GlcNAc...) asparagine" evidence="3">
    <location>
        <position position="566"/>
    </location>
</feature>
<feature type="disulfide bond" evidence="4 8">
    <location>
        <begin position="96"/>
        <end position="102"/>
    </location>
</feature>
<feature type="strand" evidence="9">
    <location>
        <begin position="32"/>
        <end position="36"/>
    </location>
</feature>
<feature type="strand" evidence="9">
    <location>
        <begin position="44"/>
        <end position="46"/>
    </location>
</feature>
<feature type="helix" evidence="9">
    <location>
        <begin position="48"/>
        <end position="52"/>
    </location>
</feature>
<feature type="helix" evidence="9">
    <location>
        <begin position="58"/>
        <end position="61"/>
    </location>
</feature>
<feature type="strand" evidence="9">
    <location>
        <begin position="65"/>
        <end position="67"/>
    </location>
</feature>
<feature type="strand" evidence="9">
    <location>
        <begin position="75"/>
        <end position="78"/>
    </location>
</feature>
<feature type="turn" evidence="9">
    <location>
        <begin position="79"/>
        <end position="82"/>
    </location>
</feature>
<feature type="strand" evidence="9">
    <location>
        <begin position="83"/>
        <end position="88"/>
    </location>
</feature>
<feature type="helix" evidence="9">
    <location>
        <begin position="92"/>
        <end position="95"/>
    </location>
</feature>
<feature type="turn" evidence="9">
    <location>
        <begin position="96"/>
        <end position="98"/>
    </location>
</feature>
<feature type="strand" evidence="9">
    <location>
        <begin position="103"/>
        <end position="110"/>
    </location>
</feature>
<feature type="turn" evidence="9">
    <location>
        <begin position="111"/>
        <end position="114"/>
    </location>
</feature>
<feature type="strand" evidence="9">
    <location>
        <begin position="115"/>
        <end position="124"/>
    </location>
</feature>
<feature type="strand" evidence="9">
    <location>
        <begin position="134"/>
        <end position="143"/>
    </location>
</feature>
<feature type="strand" evidence="9">
    <location>
        <begin position="151"/>
        <end position="153"/>
    </location>
</feature>
<feature type="helix" evidence="9">
    <location>
        <begin position="163"/>
        <end position="165"/>
    </location>
</feature>
<feature type="strand" evidence="9">
    <location>
        <begin position="166"/>
        <end position="172"/>
    </location>
</feature>
<feature type="strand" evidence="9">
    <location>
        <begin position="176"/>
        <end position="183"/>
    </location>
</feature>
<feature type="turn" evidence="9">
    <location>
        <begin position="186"/>
        <end position="188"/>
    </location>
</feature>
<feature type="strand" evidence="9">
    <location>
        <begin position="191"/>
        <end position="196"/>
    </location>
</feature>
<feature type="turn" evidence="9">
    <location>
        <begin position="202"/>
        <end position="204"/>
    </location>
</feature>
<feature type="strand" evidence="9">
    <location>
        <begin position="206"/>
        <end position="220"/>
    </location>
</feature>
<feature type="strand" evidence="9">
    <location>
        <begin position="223"/>
        <end position="233"/>
    </location>
</feature>
<feature type="strand" evidence="9">
    <location>
        <begin position="241"/>
        <end position="243"/>
    </location>
</feature>
<feature type="strand" evidence="9">
    <location>
        <begin position="245"/>
        <end position="252"/>
    </location>
</feature>
<feature type="strand" evidence="9">
    <location>
        <begin position="260"/>
        <end position="263"/>
    </location>
</feature>
<feature type="helix" evidence="9">
    <location>
        <begin position="272"/>
        <end position="274"/>
    </location>
</feature>
<feature type="strand" evidence="9">
    <location>
        <begin position="278"/>
        <end position="282"/>
    </location>
</feature>
<feature type="strand" evidence="9">
    <location>
        <begin position="285"/>
        <end position="287"/>
    </location>
</feature>
<feature type="strand" evidence="9">
    <location>
        <begin position="291"/>
        <end position="293"/>
    </location>
</feature>
<feature type="turn" evidence="9">
    <location>
        <begin position="295"/>
        <end position="297"/>
    </location>
</feature>
<feature type="strand" evidence="9">
    <location>
        <begin position="299"/>
        <end position="304"/>
    </location>
</feature>
<feature type="turn" evidence="9">
    <location>
        <begin position="308"/>
        <end position="310"/>
    </location>
</feature>
<feature type="strand" evidence="9">
    <location>
        <begin position="313"/>
        <end position="321"/>
    </location>
</feature>
<feature type="strand" evidence="9">
    <location>
        <begin position="323"/>
        <end position="325"/>
    </location>
</feature>
<feature type="strand" evidence="9">
    <location>
        <begin position="327"/>
        <end position="337"/>
    </location>
</feature>
<feature type="strand" evidence="9">
    <location>
        <begin position="345"/>
        <end position="351"/>
    </location>
</feature>
<feature type="strand" evidence="9">
    <location>
        <begin position="353"/>
        <end position="355"/>
    </location>
</feature>
<feature type="strand" evidence="9">
    <location>
        <begin position="363"/>
        <end position="370"/>
    </location>
</feature>
<feature type="helix" evidence="9">
    <location>
        <begin position="375"/>
        <end position="377"/>
    </location>
</feature>
<feature type="strand" evidence="9">
    <location>
        <begin position="380"/>
        <end position="383"/>
    </location>
</feature>
<feature type="strand" evidence="9">
    <location>
        <begin position="386"/>
        <end position="396"/>
    </location>
</feature>
<feature type="strand" evidence="9">
    <location>
        <begin position="399"/>
        <end position="406"/>
    </location>
</feature>
<feature type="turn" evidence="9">
    <location>
        <begin position="410"/>
        <end position="412"/>
    </location>
</feature>
<feature type="strand" evidence="9">
    <location>
        <begin position="414"/>
        <end position="424"/>
    </location>
</feature>
<feature type="strand" evidence="9">
    <location>
        <begin position="426"/>
        <end position="428"/>
    </location>
</feature>
<feature type="strand" evidence="9">
    <location>
        <begin position="431"/>
        <end position="440"/>
    </location>
</feature>
<name>PCDB8_MOUSE</name>
<reference key="1">
    <citation type="journal article" date="2001" name="Genome Res.">
        <title>Comparative DNA sequence analysis of mouse and human protocadherin gene clusters.</title>
        <authorList>
            <person name="Wu Q."/>
            <person name="Zhang T."/>
            <person name="Cheng J.-F."/>
            <person name="Kim Y."/>
            <person name="Grimwood J."/>
            <person name="Schmutz J."/>
            <person name="Dickson M."/>
            <person name="Noonan J.P."/>
            <person name="Zhang M.Q."/>
            <person name="Myers R.M."/>
            <person name="Maniatis T."/>
        </authorList>
    </citation>
    <scope>NUCLEOTIDE SEQUENCE [MRNA]</scope>
    <source>
        <tissue>Brain</tissue>
    </source>
</reference>
<reference key="2">
    <citation type="journal article" date="2009" name="PLoS Biol.">
        <title>Lineage-specific biology revealed by a finished genome assembly of the mouse.</title>
        <authorList>
            <person name="Church D.M."/>
            <person name="Goodstadt L."/>
            <person name="Hillier L.W."/>
            <person name="Zody M.C."/>
            <person name="Goldstein S."/>
            <person name="She X."/>
            <person name="Bult C.J."/>
            <person name="Agarwala R."/>
            <person name="Cherry J.L."/>
            <person name="DiCuccio M."/>
            <person name="Hlavina W."/>
            <person name="Kapustin Y."/>
            <person name="Meric P."/>
            <person name="Maglott D."/>
            <person name="Birtle Z."/>
            <person name="Marques A.C."/>
            <person name="Graves T."/>
            <person name="Zhou S."/>
            <person name="Teague B."/>
            <person name="Potamousis K."/>
            <person name="Churas C."/>
            <person name="Place M."/>
            <person name="Herschleb J."/>
            <person name="Runnheim R."/>
            <person name="Forrest D."/>
            <person name="Amos-Landgraf J."/>
            <person name="Schwartz D.C."/>
            <person name="Cheng Z."/>
            <person name="Lindblad-Toh K."/>
            <person name="Eichler E.E."/>
            <person name="Ponting C.P."/>
        </authorList>
    </citation>
    <scope>NUCLEOTIDE SEQUENCE [LARGE SCALE GENOMIC DNA]</scope>
    <source>
        <strain>C57BL/6J</strain>
    </source>
</reference>
<reference key="3">
    <citation type="submission" date="2005-09" db="EMBL/GenBank/DDBJ databases">
        <authorList>
            <person name="Mural R.J."/>
            <person name="Adams M.D."/>
            <person name="Myers E.W."/>
            <person name="Smith H.O."/>
            <person name="Venter J.C."/>
        </authorList>
    </citation>
    <scope>NUCLEOTIDE SEQUENCE [LARGE SCALE GENOMIC DNA]</scope>
</reference>
<reference key="4">
    <citation type="journal article" date="2004" name="Genome Res.">
        <title>The status, quality, and expansion of the NIH full-length cDNA project: the Mammalian Gene Collection (MGC).</title>
        <authorList>
            <consortium name="The MGC Project Team"/>
        </authorList>
    </citation>
    <scope>NUCLEOTIDE SEQUENCE [LARGE SCALE MRNA]</scope>
</reference>
<reference key="5">
    <citation type="journal article" date="2016" name="Neuron">
        <title>Structural basis of diverse homophilic recognition by clustered alpha- and beta-protocadherins.</title>
        <authorList>
            <person name="Goodman K.M."/>
            <person name="Rubinstein R."/>
            <person name="Thu C.A."/>
            <person name="Bahna F."/>
            <person name="Mannepalli S."/>
            <person name="Ahlsen G."/>
            <person name="Rittenhouse C."/>
            <person name="Maniatis T."/>
            <person name="Honig B."/>
            <person name="Shapiro L."/>
        </authorList>
    </citation>
    <scope>X-RAY CRYSTALLOGRAPHY (2.90 ANGSTROMS) OF 29-446 OF HOMODIMER IN COMPLEX WITH CALCIUM</scope>
    <scope>PROTEIN SEQUENCE OF 29-35</scope>
    <scope>FUNCTION</scope>
    <scope>SUBUNIT</scope>
    <scope>SUBCELLULAR LOCATION</scope>
    <scope>TOPOLOGY</scope>
    <scope>DOMAIN</scope>
    <scope>DISULFIDE BONDS</scope>
    <scope>GLYCOSYLATION AT ASN-169; SER-223; THR-225; THR-227 AND ASN-417</scope>
    <scope>CALCIUM-BINDING</scope>
</reference>
<proteinExistence type="evidence at protein level"/>
<accession>Q91XZ2</accession>
<evidence type="ECO:0000255" key="1"/>
<evidence type="ECO:0000255" key="2">
    <source>
        <dbReference type="PROSITE-ProRule" id="PRU00043"/>
    </source>
</evidence>
<evidence type="ECO:0000255" key="3">
    <source>
        <dbReference type="PROSITE-ProRule" id="PRU00498"/>
    </source>
</evidence>
<evidence type="ECO:0000269" key="4">
    <source>
    </source>
</evidence>
<evidence type="ECO:0000305" key="5"/>
<evidence type="ECO:0000305" key="6">
    <source>
    </source>
</evidence>
<evidence type="ECO:0000312" key="7">
    <source>
        <dbReference type="MGI" id="MGI:2136742"/>
    </source>
</evidence>
<evidence type="ECO:0000312" key="8">
    <source>
        <dbReference type="PDB" id="5DZY"/>
    </source>
</evidence>
<evidence type="ECO:0007829" key="9">
    <source>
        <dbReference type="PDB" id="5DZY"/>
    </source>
</evidence>
<keyword id="KW-0002">3D-structure</keyword>
<keyword id="KW-0106">Calcium</keyword>
<keyword id="KW-0130">Cell adhesion</keyword>
<keyword id="KW-1003">Cell membrane</keyword>
<keyword id="KW-0903">Direct protein sequencing</keyword>
<keyword id="KW-1015">Disulfide bond</keyword>
<keyword id="KW-0325">Glycoprotein</keyword>
<keyword id="KW-0472">Membrane</keyword>
<keyword id="KW-0479">Metal-binding</keyword>
<keyword id="KW-1185">Reference proteome</keyword>
<keyword id="KW-0677">Repeat</keyword>
<keyword id="KW-0732">Signal</keyword>
<keyword id="KW-0812">Transmembrane</keyword>
<keyword id="KW-1133">Transmembrane helix</keyword>